<gene>
    <name evidence="1" type="primary">rpmC</name>
    <name evidence="1" type="synonym">rpl29</name>
    <name type="ordered locus">Synpcc7942_2224</name>
</gene>
<accession>Q31L15</accession>
<reference key="1">
    <citation type="submission" date="2005-08" db="EMBL/GenBank/DDBJ databases">
        <title>Complete sequence of chromosome 1 of Synechococcus elongatus PCC 7942.</title>
        <authorList>
            <consortium name="US DOE Joint Genome Institute"/>
            <person name="Copeland A."/>
            <person name="Lucas S."/>
            <person name="Lapidus A."/>
            <person name="Barry K."/>
            <person name="Detter J.C."/>
            <person name="Glavina T."/>
            <person name="Hammon N."/>
            <person name="Israni S."/>
            <person name="Pitluck S."/>
            <person name="Schmutz J."/>
            <person name="Larimer F."/>
            <person name="Land M."/>
            <person name="Kyrpides N."/>
            <person name="Lykidis A."/>
            <person name="Golden S."/>
            <person name="Richardson P."/>
        </authorList>
    </citation>
    <scope>NUCLEOTIDE SEQUENCE [LARGE SCALE GENOMIC DNA]</scope>
    <source>
        <strain>ATCC 33912 / PCC 7942 / FACHB-805</strain>
    </source>
</reference>
<evidence type="ECO:0000255" key="1">
    <source>
        <dbReference type="HAMAP-Rule" id="MF_00374"/>
    </source>
</evidence>
<evidence type="ECO:0000305" key="2"/>
<proteinExistence type="inferred from homology"/>
<organism>
    <name type="scientific">Synechococcus elongatus (strain ATCC 33912 / PCC 7942 / FACHB-805)</name>
    <name type="common">Anacystis nidulans R2</name>
    <dbReference type="NCBI Taxonomy" id="1140"/>
    <lineage>
        <taxon>Bacteria</taxon>
        <taxon>Bacillati</taxon>
        <taxon>Cyanobacteriota</taxon>
        <taxon>Cyanophyceae</taxon>
        <taxon>Synechococcales</taxon>
        <taxon>Synechococcaceae</taxon>
        <taxon>Synechococcus</taxon>
    </lineage>
</organism>
<keyword id="KW-1185">Reference proteome</keyword>
<keyword id="KW-0687">Ribonucleoprotein</keyword>
<keyword id="KW-0689">Ribosomal protein</keyword>
<protein>
    <recommendedName>
        <fullName evidence="1">Large ribosomal subunit protein uL29</fullName>
    </recommendedName>
    <alternativeName>
        <fullName evidence="2">50S ribosomal protein L29</fullName>
    </alternativeName>
</protein>
<dbReference type="EMBL" id="CP000100">
    <property type="protein sequence ID" value="ABB58254.1"/>
    <property type="molecule type" value="Genomic_DNA"/>
</dbReference>
<dbReference type="RefSeq" id="WP_011244183.1">
    <property type="nucleotide sequence ID" value="NZ_JACJTX010000001.1"/>
</dbReference>
<dbReference type="SMR" id="Q31L15"/>
<dbReference type="STRING" id="1140.Synpcc7942_2224"/>
<dbReference type="PaxDb" id="1140-Synpcc7942_2224"/>
<dbReference type="GeneID" id="72431107"/>
<dbReference type="KEGG" id="syf:Synpcc7942_2224"/>
<dbReference type="eggNOG" id="COG0255">
    <property type="taxonomic scope" value="Bacteria"/>
</dbReference>
<dbReference type="HOGENOM" id="CLU_158491_0_0_3"/>
<dbReference type="OrthoDB" id="9815192at2"/>
<dbReference type="BioCyc" id="SYNEL:SYNPCC7942_2224-MONOMER"/>
<dbReference type="Proteomes" id="UP000889800">
    <property type="component" value="Chromosome"/>
</dbReference>
<dbReference type="GO" id="GO:0022625">
    <property type="term" value="C:cytosolic large ribosomal subunit"/>
    <property type="evidence" value="ECO:0007669"/>
    <property type="project" value="TreeGrafter"/>
</dbReference>
<dbReference type="GO" id="GO:0003735">
    <property type="term" value="F:structural constituent of ribosome"/>
    <property type="evidence" value="ECO:0007669"/>
    <property type="project" value="InterPro"/>
</dbReference>
<dbReference type="GO" id="GO:0006412">
    <property type="term" value="P:translation"/>
    <property type="evidence" value="ECO:0007669"/>
    <property type="project" value="UniProtKB-UniRule"/>
</dbReference>
<dbReference type="CDD" id="cd00427">
    <property type="entry name" value="Ribosomal_L29_HIP"/>
    <property type="match status" value="1"/>
</dbReference>
<dbReference type="FunFam" id="1.10.287.310:FF:000001">
    <property type="entry name" value="50S ribosomal protein L29"/>
    <property type="match status" value="1"/>
</dbReference>
<dbReference type="Gene3D" id="1.10.287.310">
    <property type="match status" value="1"/>
</dbReference>
<dbReference type="HAMAP" id="MF_00374">
    <property type="entry name" value="Ribosomal_uL29"/>
    <property type="match status" value="1"/>
</dbReference>
<dbReference type="InterPro" id="IPR050063">
    <property type="entry name" value="Ribosomal_protein_uL29"/>
</dbReference>
<dbReference type="InterPro" id="IPR001854">
    <property type="entry name" value="Ribosomal_uL29"/>
</dbReference>
<dbReference type="InterPro" id="IPR018254">
    <property type="entry name" value="Ribosomal_uL29_CS"/>
</dbReference>
<dbReference type="InterPro" id="IPR036049">
    <property type="entry name" value="Ribosomal_uL29_sf"/>
</dbReference>
<dbReference type="NCBIfam" id="TIGR00012">
    <property type="entry name" value="L29"/>
    <property type="match status" value="1"/>
</dbReference>
<dbReference type="PANTHER" id="PTHR10916">
    <property type="entry name" value="60S RIBOSOMAL PROTEIN L35/50S RIBOSOMAL PROTEIN L29"/>
    <property type="match status" value="1"/>
</dbReference>
<dbReference type="PANTHER" id="PTHR10916:SF0">
    <property type="entry name" value="LARGE RIBOSOMAL SUBUNIT PROTEIN UL29C"/>
    <property type="match status" value="1"/>
</dbReference>
<dbReference type="Pfam" id="PF00831">
    <property type="entry name" value="Ribosomal_L29"/>
    <property type="match status" value="1"/>
</dbReference>
<dbReference type="SUPFAM" id="SSF46561">
    <property type="entry name" value="Ribosomal protein L29 (L29p)"/>
    <property type="match status" value="1"/>
</dbReference>
<dbReference type="PROSITE" id="PS00579">
    <property type="entry name" value="RIBOSOMAL_L29"/>
    <property type="match status" value="1"/>
</dbReference>
<name>RL29_SYNE7</name>
<sequence>MALPKIEDVRNLSDADLAEKIAEAKRELFDLRFQRATRQLEKPHLFKHTKHRLAQLLTVERERQ</sequence>
<comment type="similarity">
    <text evidence="1">Belongs to the universal ribosomal protein uL29 family.</text>
</comment>
<feature type="chain" id="PRO_1000007638" description="Large ribosomal subunit protein uL29">
    <location>
        <begin position="1"/>
        <end position="64"/>
    </location>
</feature>